<feature type="signal peptide" evidence="2">
    <location>
        <begin position="1"/>
        <end position="15"/>
    </location>
</feature>
<feature type="chain" id="PRO_0000420611" description="Dipeptidyl-peptidase 4">
    <location>
        <begin position="16"/>
        <end position="761"/>
    </location>
</feature>
<feature type="active site" description="Charge relay system" evidence="1">
    <location>
        <position position="622"/>
    </location>
</feature>
<feature type="active site" description="Charge relay system" evidence="1">
    <location>
        <position position="706"/>
    </location>
</feature>
<feature type="active site" description="Charge relay system" evidence="1">
    <location>
        <position position="738"/>
    </location>
</feature>
<reference key="1">
    <citation type="journal article" date="2002" name="Biochem. J.">
        <title>Membrane-associated dipeptidyl peptidase IV is involved in encystation-specific gene expression during Giardia differentiation.</title>
        <authorList>
            <person name="Touz M.C."/>
            <person name="Nores M.J."/>
            <person name="Slavin I."/>
            <person name="Piacenza L."/>
            <person name="Acosta D."/>
            <person name="Carmona C."/>
            <person name="Lujan H.D."/>
        </authorList>
    </citation>
    <scope>NUCLEOTIDE SEQUENCE [GENOMIC DNA]</scope>
    <scope>PROTEIN SEQUENCE OF 256-266</scope>
    <scope>SUBCELLULAR LOCATION</scope>
    <scope>INDUCTION</scope>
    <scope>DEVELOPMENTAL STAGE</scope>
    <source>
        <strain>WB1267</strain>
    </source>
</reference>
<proteinExistence type="evidence at protein level"/>
<comment type="function">
    <text evidence="1">May be involved in metabolism of dipeptides or may affect host defense mechanisms.</text>
</comment>
<comment type="subcellular location">
    <subcellularLocation>
        <location evidence="5">Membrane</location>
    </subcellularLocation>
    <text>Associated with trophozoite membrane.</text>
</comment>
<comment type="developmental stage">
    <text evidence="3">Expressed throughout the life cycle, but expression is slightly decreased during encystation.</text>
</comment>
<comment type="induction">
    <text evidence="3">Expression increased in response to the protease inhibitor bestatin.</text>
</comment>
<comment type="similarity">
    <text evidence="4">Belongs to the peptidase S9C family.</text>
</comment>
<keyword id="KW-0031">Aminopeptidase</keyword>
<keyword id="KW-0903">Direct protein sequencing</keyword>
<keyword id="KW-0378">Hydrolase</keyword>
<keyword id="KW-0472">Membrane</keyword>
<keyword id="KW-0645">Protease</keyword>
<keyword id="KW-0732">Signal</keyword>
<protein>
    <recommendedName>
        <fullName>Dipeptidyl-peptidase 4</fullName>
        <ecNumber>3.4.14.-</ecNumber>
    </recommendedName>
    <alternativeName>
        <fullName>Dipeptidyl-aminopeptidase</fullName>
    </alternativeName>
    <alternativeName>
        <fullName>Dipeptidylpeptidase IV</fullName>
        <shortName>DPP IV</shortName>
    </alternativeName>
</protein>
<accession>Q95WU5</accession>
<accession>A8BCK9</accession>
<sequence>MTLSAWIILVTLAMASVLTPEDNVRLRRLTAYVANADASIVLLTYTEYEEGTNHGNSMLWRINDPLEAEYPFDPDDISLLNAERVCPELVGVGDLQYSTHNQAFYFTAQGPDGTSQVYSYNHKLETCTQISFLPISVSNLKVSPKGNSVLFSAEIFVYPNNHASVDDPLNFAHDEFARIQARPYKAFAYEQLYTRHWDEDILPSQYRHLFAARLERSSEYDDDYVRITVDNSIDLMPRFDGDCPMRPFADASSYTFDSHGRYVAFVTQVGSTAAFYTNDSIWITDLQQFLDAKKPVRDVVLPLRCATCWNKARDQRPAFSYDGIFLYYASMDEEQSESDLLRLRKQNVSDLFEYDCDSLFCGPVTGEGVFNLTAGVFDRSIGQFIIPTDSTEDSIYILAEDHARTNLFRYNEESSTVTRLTYNGTLGSLLYLRHNKIFLATMSSYTRPTDLVMLDLTVATEFTATRDPSDTMKDDLIKISYLTDLNRQRLRHIDELQEPEEFYLPSKSFPDQYVHSWYFAPANLRDSHEYPLILYVHGGPESPWANSWSYRWNPQLIAARGYGVLATNFHGSSSFGEVFQKSVRGNWYSYPLEDIMDAWSNIYTHADKAYLSREKVCAMGASFGATFMNYMNSHVNNVTCYVTHDGVFDTMCNALETDELFFPVRELGGFLLDEQVDNQQLYEKWNPARFVENMSAPMLVIHGQKDYRIQVYHGISLFQALRLRGIKTKLVYFPTQSHWVWQPQESLFWHTQVFDWLDTYL</sequence>
<gene>
    <name type="primary">DPP</name>
</gene>
<organism>
    <name type="scientific">Giardia intestinalis</name>
    <name type="common">Giardia lamblia</name>
    <dbReference type="NCBI Taxonomy" id="5741"/>
    <lineage>
        <taxon>Eukaryota</taxon>
        <taxon>Metamonada</taxon>
        <taxon>Diplomonadida</taxon>
        <taxon>Hexamitidae</taxon>
        <taxon>Giardiinae</taxon>
        <taxon>Giardia</taxon>
    </lineage>
</organism>
<dbReference type="EC" id="3.4.14.-"/>
<dbReference type="EMBL" id="AF293412">
    <property type="protein sequence ID" value="AAK97082.1"/>
    <property type="molecule type" value="Genomic_DNA"/>
</dbReference>
<dbReference type="RefSeq" id="XP_001707929.1">
    <property type="nucleotide sequence ID" value="XM_001707877.1"/>
</dbReference>
<dbReference type="SMR" id="Q95WU5"/>
<dbReference type="ESTHER" id="giain-Q95WU5">
    <property type="family name" value="Prolyl_oligopeptidase_S9"/>
</dbReference>
<dbReference type="MEROPS" id="S09.056"/>
<dbReference type="KEGG" id="gla:GL50803_006148"/>
<dbReference type="VEuPathDB" id="GiardiaDB:DHA2_6148"/>
<dbReference type="VEuPathDB" id="GiardiaDB:GL50581_2060"/>
<dbReference type="VEuPathDB" id="GiardiaDB:GL50803_006148"/>
<dbReference type="VEuPathDB" id="GiardiaDB:QR46_3998"/>
<dbReference type="eggNOG" id="KOG2100">
    <property type="taxonomic scope" value="Eukaryota"/>
</dbReference>
<dbReference type="OrthoDB" id="416344at2759"/>
<dbReference type="GO" id="GO:0016020">
    <property type="term" value="C:membrane"/>
    <property type="evidence" value="ECO:0007669"/>
    <property type="project" value="UniProtKB-SubCell"/>
</dbReference>
<dbReference type="GO" id="GO:0004177">
    <property type="term" value="F:aminopeptidase activity"/>
    <property type="evidence" value="ECO:0007669"/>
    <property type="project" value="UniProtKB-KW"/>
</dbReference>
<dbReference type="GO" id="GO:0004252">
    <property type="term" value="F:serine-type endopeptidase activity"/>
    <property type="evidence" value="ECO:0007669"/>
    <property type="project" value="TreeGrafter"/>
</dbReference>
<dbReference type="GO" id="GO:0006508">
    <property type="term" value="P:proteolysis"/>
    <property type="evidence" value="ECO:0007669"/>
    <property type="project" value="UniProtKB-KW"/>
</dbReference>
<dbReference type="FunFam" id="3.40.50.1820:FF:000028">
    <property type="entry name" value="S9 family peptidase"/>
    <property type="match status" value="1"/>
</dbReference>
<dbReference type="Gene3D" id="3.40.50.1820">
    <property type="entry name" value="alpha/beta hydrolase"/>
    <property type="match status" value="1"/>
</dbReference>
<dbReference type="InterPro" id="IPR029058">
    <property type="entry name" value="AB_hydrolase_fold"/>
</dbReference>
<dbReference type="InterPro" id="IPR001375">
    <property type="entry name" value="Peptidase_S9_cat"/>
</dbReference>
<dbReference type="PANTHER" id="PTHR42776:SF13">
    <property type="entry name" value="DIPEPTIDYL-PEPTIDASE 5"/>
    <property type="match status" value="1"/>
</dbReference>
<dbReference type="PANTHER" id="PTHR42776">
    <property type="entry name" value="SERINE PEPTIDASE S9 FAMILY MEMBER"/>
    <property type="match status" value="1"/>
</dbReference>
<dbReference type="Pfam" id="PF00326">
    <property type="entry name" value="Peptidase_S9"/>
    <property type="match status" value="1"/>
</dbReference>
<dbReference type="SUPFAM" id="SSF53474">
    <property type="entry name" value="alpha/beta-Hydrolases"/>
    <property type="match status" value="1"/>
</dbReference>
<dbReference type="SUPFAM" id="SSF82171">
    <property type="entry name" value="DPP6 N-terminal domain-like"/>
    <property type="match status" value="2"/>
</dbReference>
<evidence type="ECO:0000250" key="1"/>
<evidence type="ECO:0000255" key="2"/>
<evidence type="ECO:0000269" key="3">
    <source>
    </source>
</evidence>
<evidence type="ECO:0000305" key="4"/>
<evidence type="ECO:0000305" key="5">
    <source>
    </source>
</evidence>
<name>DPP_GIAIN</name>